<protein>
    <recommendedName>
        <fullName evidence="1">ATP-dependent Clp protease proteolytic subunit</fullName>
        <ecNumber evidence="1">3.4.21.92</ecNumber>
    </recommendedName>
    <alternativeName>
        <fullName evidence="1">Endopeptidase Clp</fullName>
    </alternativeName>
</protein>
<keyword id="KW-0963">Cytoplasm</keyword>
<keyword id="KW-0378">Hydrolase</keyword>
<keyword id="KW-0645">Protease</keyword>
<keyword id="KW-1185">Reference proteome</keyword>
<keyword id="KW-0720">Serine protease</keyword>
<proteinExistence type="inferred from homology"/>
<feature type="chain" id="PRO_1000026090" description="ATP-dependent Clp protease proteolytic subunit">
    <location>
        <begin position="1"/>
        <end position="207"/>
    </location>
</feature>
<feature type="active site" description="Nucleophile" evidence="1">
    <location>
        <position position="111"/>
    </location>
</feature>
<feature type="active site" evidence="1">
    <location>
        <position position="136"/>
    </location>
</feature>
<organism>
    <name type="scientific">Escherichia coli O1:K1 / APEC</name>
    <dbReference type="NCBI Taxonomy" id="405955"/>
    <lineage>
        <taxon>Bacteria</taxon>
        <taxon>Pseudomonadati</taxon>
        <taxon>Pseudomonadota</taxon>
        <taxon>Gammaproteobacteria</taxon>
        <taxon>Enterobacterales</taxon>
        <taxon>Enterobacteriaceae</taxon>
        <taxon>Escherichia</taxon>
    </lineage>
</organism>
<gene>
    <name evidence="1" type="primary">clpP</name>
    <name type="ordered locus">Ecok1_04020</name>
    <name type="ORF">APECO1_1574</name>
</gene>
<reference key="1">
    <citation type="journal article" date="2007" name="J. Bacteriol.">
        <title>The genome sequence of avian pathogenic Escherichia coli strain O1:K1:H7 shares strong similarities with human extraintestinal pathogenic E. coli genomes.</title>
        <authorList>
            <person name="Johnson T.J."/>
            <person name="Kariyawasam S."/>
            <person name="Wannemuehler Y."/>
            <person name="Mangiamele P."/>
            <person name="Johnson S.J."/>
            <person name="Doetkott C."/>
            <person name="Skyberg J.A."/>
            <person name="Lynne A.M."/>
            <person name="Johnson J.R."/>
            <person name="Nolan L.K."/>
        </authorList>
    </citation>
    <scope>NUCLEOTIDE SEQUENCE [LARGE SCALE GENOMIC DNA]</scope>
</reference>
<dbReference type="EC" id="3.4.21.92" evidence="1"/>
<dbReference type="EMBL" id="CP000468">
    <property type="protein sequence ID" value="ABI99895.1"/>
    <property type="molecule type" value="Genomic_DNA"/>
</dbReference>
<dbReference type="RefSeq" id="WP_000122253.1">
    <property type="nucleotide sequence ID" value="NZ_CADILS010000009.1"/>
</dbReference>
<dbReference type="BMRB" id="A1A8A6"/>
<dbReference type="SMR" id="A1A8A6"/>
<dbReference type="MEROPS" id="S14.001"/>
<dbReference type="GeneID" id="93777017"/>
<dbReference type="KEGG" id="ecv:APECO1_1574"/>
<dbReference type="HOGENOM" id="CLU_058707_3_2_6"/>
<dbReference type="Proteomes" id="UP000008216">
    <property type="component" value="Chromosome"/>
</dbReference>
<dbReference type="GO" id="GO:0005737">
    <property type="term" value="C:cytoplasm"/>
    <property type="evidence" value="ECO:0007669"/>
    <property type="project" value="UniProtKB-SubCell"/>
</dbReference>
<dbReference type="GO" id="GO:0009368">
    <property type="term" value="C:endopeptidase Clp complex"/>
    <property type="evidence" value="ECO:0007669"/>
    <property type="project" value="TreeGrafter"/>
</dbReference>
<dbReference type="GO" id="GO:0004176">
    <property type="term" value="F:ATP-dependent peptidase activity"/>
    <property type="evidence" value="ECO:0007669"/>
    <property type="project" value="InterPro"/>
</dbReference>
<dbReference type="GO" id="GO:0051117">
    <property type="term" value="F:ATPase binding"/>
    <property type="evidence" value="ECO:0007669"/>
    <property type="project" value="TreeGrafter"/>
</dbReference>
<dbReference type="GO" id="GO:0004252">
    <property type="term" value="F:serine-type endopeptidase activity"/>
    <property type="evidence" value="ECO:0007669"/>
    <property type="project" value="UniProtKB-UniRule"/>
</dbReference>
<dbReference type="GO" id="GO:0006515">
    <property type="term" value="P:protein quality control for misfolded or incompletely synthesized proteins"/>
    <property type="evidence" value="ECO:0007669"/>
    <property type="project" value="TreeGrafter"/>
</dbReference>
<dbReference type="CDD" id="cd07017">
    <property type="entry name" value="S14_ClpP_2"/>
    <property type="match status" value="1"/>
</dbReference>
<dbReference type="FunFam" id="3.90.226.10:FF:000001">
    <property type="entry name" value="ATP-dependent Clp protease proteolytic subunit"/>
    <property type="match status" value="1"/>
</dbReference>
<dbReference type="Gene3D" id="3.90.226.10">
    <property type="entry name" value="2-enoyl-CoA Hydratase, Chain A, domain 1"/>
    <property type="match status" value="1"/>
</dbReference>
<dbReference type="HAMAP" id="MF_00444">
    <property type="entry name" value="ClpP"/>
    <property type="match status" value="1"/>
</dbReference>
<dbReference type="InterPro" id="IPR001907">
    <property type="entry name" value="ClpP"/>
</dbReference>
<dbReference type="InterPro" id="IPR029045">
    <property type="entry name" value="ClpP/crotonase-like_dom_sf"/>
</dbReference>
<dbReference type="InterPro" id="IPR023562">
    <property type="entry name" value="ClpP/TepA"/>
</dbReference>
<dbReference type="InterPro" id="IPR033135">
    <property type="entry name" value="ClpP_His_AS"/>
</dbReference>
<dbReference type="InterPro" id="IPR018215">
    <property type="entry name" value="ClpP_Ser_AS"/>
</dbReference>
<dbReference type="NCBIfam" id="TIGR00493">
    <property type="entry name" value="clpP"/>
    <property type="match status" value="1"/>
</dbReference>
<dbReference type="NCBIfam" id="NF001368">
    <property type="entry name" value="PRK00277.1"/>
    <property type="match status" value="1"/>
</dbReference>
<dbReference type="NCBIfam" id="NF009205">
    <property type="entry name" value="PRK12553.1"/>
    <property type="match status" value="1"/>
</dbReference>
<dbReference type="PANTHER" id="PTHR10381">
    <property type="entry name" value="ATP-DEPENDENT CLP PROTEASE PROTEOLYTIC SUBUNIT"/>
    <property type="match status" value="1"/>
</dbReference>
<dbReference type="PANTHER" id="PTHR10381:SF70">
    <property type="entry name" value="ATP-DEPENDENT CLP PROTEASE PROTEOLYTIC SUBUNIT"/>
    <property type="match status" value="1"/>
</dbReference>
<dbReference type="Pfam" id="PF00574">
    <property type="entry name" value="CLP_protease"/>
    <property type="match status" value="1"/>
</dbReference>
<dbReference type="PRINTS" id="PR00127">
    <property type="entry name" value="CLPPROTEASEP"/>
</dbReference>
<dbReference type="SUPFAM" id="SSF52096">
    <property type="entry name" value="ClpP/crotonase"/>
    <property type="match status" value="1"/>
</dbReference>
<dbReference type="PROSITE" id="PS00382">
    <property type="entry name" value="CLP_PROTEASE_HIS"/>
    <property type="match status" value="1"/>
</dbReference>
<dbReference type="PROSITE" id="PS00381">
    <property type="entry name" value="CLP_PROTEASE_SER"/>
    <property type="match status" value="1"/>
</dbReference>
<accession>A1A8A6</accession>
<name>CLPP_ECOK1</name>
<sequence length="207" mass="23187">MSYSGERDNFAPHMALVPMVIEQTSRGERSFDIYSRLLKERVIFLTGQVEDHMANLIVAQMLFLEAENPEKDIYLYINSPGGVITAGMSIYDTMQFIKPDVSTICMGQAASMGAFLLTAGAKGKRFCLPNSRVMIHQPLGGYQGQATDIEIHAREILKVKGRMNELMALHTGQSLEQIERDTERDRFLSAPEAVEYGLVDSILTHRN</sequence>
<evidence type="ECO:0000255" key="1">
    <source>
        <dbReference type="HAMAP-Rule" id="MF_00444"/>
    </source>
</evidence>
<comment type="function">
    <text evidence="1">Cleaves peptides in various proteins in a process that requires ATP hydrolysis. Has a chymotrypsin-like activity. Plays a major role in the degradation of misfolded proteins.</text>
</comment>
<comment type="catalytic activity">
    <reaction evidence="1">
        <text>Hydrolysis of proteins to small peptides in the presence of ATP and magnesium. alpha-casein is the usual test substrate. In the absence of ATP, only oligopeptides shorter than five residues are hydrolyzed (such as succinyl-Leu-Tyr-|-NHMec, and Leu-Tyr-Leu-|-Tyr-Trp, in which cleavage of the -Tyr-|-Leu- and -Tyr-|-Trp bonds also occurs).</text>
        <dbReference type="EC" id="3.4.21.92"/>
    </reaction>
</comment>
<comment type="subunit">
    <text evidence="1">Fourteen ClpP subunits assemble into 2 heptameric rings which stack back to back to give a disk-like structure with a central cavity, resembling the structure of eukaryotic proteasomes. Component of the ClpAP and ClpXP complexes.</text>
</comment>
<comment type="subcellular location">
    <subcellularLocation>
        <location evidence="1">Cytoplasm</location>
    </subcellularLocation>
</comment>
<comment type="similarity">
    <text evidence="1">Belongs to the peptidase S14 family.</text>
</comment>